<feature type="chain" id="PRO_1000126953" description="Large ribosomal subunit protein bL9">
    <location>
        <begin position="1"/>
        <end position="148"/>
    </location>
</feature>
<protein>
    <recommendedName>
        <fullName evidence="1">Large ribosomal subunit protein bL9</fullName>
    </recommendedName>
    <alternativeName>
        <fullName evidence="2">50S ribosomal protein L9</fullName>
    </alternativeName>
</protein>
<comment type="function">
    <text evidence="1">Binds to the 23S rRNA.</text>
</comment>
<comment type="similarity">
    <text evidence="1">Belongs to the bacterial ribosomal protein bL9 family.</text>
</comment>
<evidence type="ECO:0000255" key="1">
    <source>
        <dbReference type="HAMAP-Rule" id="MF_00503"/>
    </source>
</evidence>
<evidence type="ECO:0000305" key="2"/>
<organism>
    <name type="scientific">Prosthecochloris aestuarii (strain DSM 271 / SK 413)</name>
    <dbReference type="NCBI Taxonomy" id="290512"/>
    <lineage>
        <taxon>Bacteria</taxon>
        <taxon>Pseudomonadati</taxon>
        <taxon>Chlorobiota</taxon>
        <taxon>Chlorobiia</taxon>
        <taxon>Chlorobiales</taxon>
        <taxon>Chlorobiaceae</taxon>
        <taxon>Prosthecochloris</taxon>
    </lineage>
</organism>
<gene>
    <name evidence="1" type="primary">rplI</name>
    <name type="ordered locus">Paes_0161</name>
</gene>
<proteinExistence type="inferred from homology"/>
<accession>B4S3C6</accession>
<dbReference type="EMBL" id="CP001108">
    <property type="protein sequence ID" value="ACF45220.1"/>
    <property type="molecule type" value="Genomic_DNA"/>
</dbReference>
<dbReference type="RefSeq" id="WP_012504757.1">
    <property type="nucleotide sequence ID" value="NC_011059.1"/>
</dbReference>
<dbReference type="SMR" id="B4S3C6"/>
<dbReference type="STRING" id="290512.Paes_0161"/>
<dbReference type="KEGG" id="paa:Paes_0161"/>
<dbReference type="eggNOG" id="COG0359">
    <property type="taxonomic scope" value="Bacteria"/>
</dbReference>
<dbReference type="HOGENOM" id="CLU_078938_3_0_10"/>
<dbReference type="Proteomes" id="UP000002725">
    <property type="component" value="Chromosome"/>
</dbReference>
<dbReference type="GO" id="GO:1990904">
    <property type="term" value="C:ribonucleoprotein complex"/>
    <property type="evidence" value="ECO:0007669"/>
    <property type="project" value="UniProtKB-KW"/>
</dbReference>
<dbReference type="GO" id="GO:0005840">
    <property type="term" value="C:ribosome"/>
    <property type="evidence" value="ECO:0007669"/>
    <property type="project" value="UniProtKB-KW"/>
</dbReference>
<dbReference type="GO" id="GO:0019843">
    <property type="term" value="F:rRNA binding"/>
    <property type="evidence" value="ECO:0007669"/>
    <property type="project" value="UniProtKB-UniRule"/>
</dbReference>
<dbReference type="GO" id="GO:0003735">
    <property type="term" value="F:structural constituent of ribosome"/>
    <property type="evidence" value="ECO:0007669"/>
    <property type="project" value="InterPro"/>
</dbReference>
<dbReference type="GO" id="GO:0006412">
    <property type="term" value="P:translation"/>
    <property type="evidence" value="ECO:0007669"/>
    <property type="project" value="UniProtKB-UniRule"/>
</dbReference>
<dbReference type="FunFam" id="3.40.5.10:FF:000003">
    <property type="entry name" value="50S ribosomal protein L9"/>
    <property type="match status" value="1"/>
</dbReference>
<dbReference type="Gene3D" id="3.10.430.100">
    <property type="entry name" value="Ribosomal protein L9, C-terminal domain"/>
    <property type="match status" value="1"/>
</dbReference>
<dbReference type="Gene3D" id="3.40.5.10">
    <property type="entry name" value="Ribosomal protein L9, N-terminal domain"/>
    <property type="match status" value="1"/>
</dbReference>
<dbReference type="HAMAP" id="MF_00503">
    <property type="entry name" value="Ribosomal_bL9"/>
    <property type="match status" value="1"/>
</dbReference>
<dbReference type="InterPro" id="IPR000244">
    <property type="entry name" value="Ribosomal_bL9"/>
</dbReference>
<dbReference type="InterPro" id="IPR009027">
    <property type="entry name" value="Ribosomal_bL9/RNase_H1_N"/>
</dbReference>
<dbReference type="InterPro" id="IPR020594">
    <property type="entry name" value="Ribosomal_bL9_bac/chp"/>
</dbReference>
<dbReference type="InterPro" id="IPR020069">
    <property type="entry name" value="Ribosomal_bL9_C"/>
</dbReference>
<dbReference type="InterPro" id="IPR036791">
    <property type="entry name" value="Ribosomal_bL9_C_sf"/>
</dbReference>
<dbReference type="InterPro" id="IPR020070">
    <property type="entry name" value="Ribosomal_bL9_N"/>
</dbReference>
<dbReference type="InterPro" id="IPR036935">
    <property type="entry name" value="Ribosomal_bL9_N_sf"/>
</dbReference>
<dbReference type="NCBIfam" id="TIGR00158">
    <property type="entry name" value="L9"/>
    <property type="match status" value="1"/>
</dbReference>
<dbReference type="PANTHER" id="PTHR21368">
    <property type="entry name" value="50S RIBOSOMAL PROTEIN L9"/>
    <property type="match status" value="1"/>
</dbReference>
<dbReference type="Pfam" id="PF03948">
    <property type="entry name" value="Ribosomal_L9_C"/>
    <property type="match status" value="1"/>
</dbReference>
<dbReference type="Pfam" id="PF01281">
    <property type="entry name" value="Ribosomal_L9_N"/>
    <property type="match status" value="1"/>
</dbReference>
<dbReference type="SUPFAM" id="SSF55658">
    <property type="entry name" value="L9 N-domain-like"/>
    <property type="match status" value="1"/>
</dbReference>
<dbReference type="SUPFAM" id="SSF55653">
    <property type="entry name" value="Ribosomal protein L9 C-domain"/>
    <property type="match status" value="1"/>
</dbReference>
<dbReference type="PROSITE" id="PS00651">
    <property type="entry name" value="RIBOSOMAL_L9"/>
    <property type="match status" value="1"/>
</dbReference>
<keyword id="KW-0687">Ribonucleoprotein</keyword>
<keyword id="KW-0689">Ribosomal protein</keyword>
<keyword id="KW-0694">RNA-binding</keyword>
<keyword id="KW-0699">rRNA-binding</keyword>
<sequence>MKVILRKNVASLGDAGEVVDVKNGYANNYLIPQGMAARATDGALKALETERKQQARKIEQQRVAARAIAEKIQQMTLKVPARAGESGKLFGTVTSVNIADALKVEGVDVDRRKITLDAPIRALGNYEAEVKLFMDVSATIKVTVEAEG</sequence>
<reference key="1">
    <citation type="submission" date="2008-06" db="EMBL/GenBank/DDBJ databases">
        <title>Complete sequence of chromosome of Prosthecochloris aestuarii DSM 271.</title>
        <authorList>
            <consortium name="US DOE Joint Genome Institute"/>
            <person name="Lucas S."/>
            <person name="Copeland A."/>
            <person name="Lapidus A."/>
            <person name="Glavina del Rio T."/>
            <person name="Dalin E."/>
            <person name="Tice H."/>
            <person name="Bruce D."/>
            <person name="Goodwin L."/>
            <person name="Pitluck S."/>
            <person name="Schmutz J."/>
            <person name="Larimer F."/>
            <person name="Land M."/>
            <person name="Hauser L."/>
            <person name="Kyrpides N."/>
            <person name="Anderson I."/>
            <person name="Liu Z."/>
            <person name="Li T."/>
            <person name="Zhao F."/>
            <person name="Overmann J."/>
            <person name="Bryant D.A."/>
            <person name="Richardson P."/>
        </authorList>
    </citation>
    <scope>NUCLEOTIDE SEQUENCE [LARGE SCALE GENOMIC DNA]</scope>
    <source>
        <strain>DSM 271 / SK 413</strain>
    </source>
</reference>
<name>RL9_PROA2</name>